<protein>
    <recommendedName>
        <fullName evidence="1">Small ribosomal subunit protein uS15</fullName>
    </recommendedName>
    <alternativeName>
        <fullName evidence="2">30S ribosomal protein S15</fullName>
    </alternativeName>
</protein>
<feature type="chain" id="PRO_1000143087" description="Small ribosomal subunit protein uS15">
    <location>
        <begin position="1"/>
        <end position="89"/>
    </location>
</feature>
<proteinExistence type="inferred from homology"/>
<gene>
    <name evidence="1" type="primary">rpsO</name>
    <name type="ordered locus">Bmul_1023</name>
    <name type="ordered locus">BMULJ_02241</name>
</gene>
<dbReference type="EMBL" id="CP000868">
    <property type="protein sequence ID" value="ABX14714.1"/>
    <property type="molecule type" value="Genomic_DNA"/>
</dbReference>
<dbReference type="EMBL" id="AP009385">
    <property type="protein sequence ID" value="BAG44136.1"/>
    <property type="molecule type" value="Genomic_DNA"/>
</dbReference>
<dbReference type="RefSeq" id="WP_006398792.1">
    <property type="nucleotide sequence ID" value="NC_010804.1"/>
</dbReference>
<dbReference type="SMR" id="A9AJN9"/>
<dbReference type="STRING" id="395019.BMULJ_02241"/>
<dbReference type="GeneID" id="98107299"/>
<dbReference type="KEGG" id="bmj:BMULJ_02241"/>
<dbReference type="KEGG" id="bmu:Bmul_1023"/>
<dbReference type="eggNOG" id="COG0184">
    <property type="taxonomic scope" value="Bacteria"/>
</dbReference>
<dbReference type="HOGENOM" id="CLU_148518_0_0_4"/>
<dbReference type="Proteomes" id="UP000008815">
    <property type="component" value="Chromosome 1"/>
</dbReference>
<dbReference type="GO" id="GO:0022627">
    <property type="term" value="C:cytosolic small ribosomal subunit"/>
    <property type="evidence" value="ECO:0007669"/>
    <property type="project" value="TreeGrafter"/>
</dbReference>
<dbReference type="GO" id="GO:0019843">
    <property type="term" value="F:rRNA binding"/>
    <property type="evidence" value="ECO:0007669"/>
    <property type="project" value="UniProtKB-UniRule"/>
</dbReference>
<dbReference type="GO" id="GO:0003735">
    <property type="term" value="F:structural constituent of ribosome"/>
    <property type="evidence" value="ECO:0007669"/>
    <property type="project" value="InterPro"/>
</dbReference>
<dbReference type="GO" id="GO:0006412">
    <property type="term" value="P:translation"/>
    <property type="evidence" value="ECO:0007669"/>
    <property type="project" value="UniProtKB-UniRule"/>
</dbReference>
<dbReference type="CDD" id="cd00353">
    <property type="entry name" value="Ribosomal_S15p_S13e"/>
    <property type="match status" value="1"/>
</dbReference>
<dbReference type="FunFam" id="1.10.287.10:FF:000002">
    <property type="entry name" value="30S ribosomal protein S15"/>
    <property type="match status" value="1"/>
</dbReference>
<dbReference type="Gene3D" id="6.10.250.3130">
    <property type="match status" value="1"/>
</dbReference>
<dbReference type="Gene3D" id="1.10.287.10">
    <property type="entry name" value="S15/NS1, RNA-binding"/>
    <property type="match status" value="1"/>
</dbReference>
<dbReference type="HAMAP" id="MF_01343_B">
    <property type="entry name" value="Ribosomal_uS15_B"/>
    <property type="match status" value="1"/>
</dbReference>
<dbReference type="InterPro" id="IPR000589">
    <property type="entry name" value="Ribosomal_uS15"/>
</dbReference>
<dbReference type="InterPro" id="IPR005290">
    <property type="entry name" value="Ribosomal_uS15_bac-type"/>
</dbReference>
<dbReference type="InterPro" id="IPR009068">
    <property type="entry name" value="uS15_NS1_RNA-bd_sf"/>
</dbReference>
<dbReference type="NCBIfam" id="TIGR00952">
    <property type="entry name" value="S15_bact"/>
    <property type="match status" value="1"/>
</dbReference>
<dbReference type="PANTHER" id="PTHR23321">
    <property type="entry name" value="RIBOSOMAL PROTEIN S15, BACTERIAL AND ORGANELLAR"/>
    <property type="match status" value="1"/>
</dbReference>
<dbReference type="PANTHER" id="PTHR23321:SF26">
    <property type="entry name" value="SMALL RIBOSOMAL SUBUNIT PROTEIN US15M"/>
    <property type="match status" value="1"/>
</dbReference>
<dbReference type="Pfam" id="PF00312">
    <property type="entry name" value="Ribosomal_S15"/>
    <property type="match status" value="1"/>
</dbReference>
<dbReference type="SMART" id="SM01387">
    <property type="entry name" value="Ribosomal_S15"/>
    <property type="match status" value="1"/>
</dbReference>
<dbReference type="SUPFAM" id="SSF47060">
    <property type="entry name" value="S15/NS1 RNA-binding domain"/>
    <property type="match status" value="1"/>
</dbReference>
<dbReference type="PROSITE" id="PS00362">
    <property type="entry name" value="RIBOSOMAL_S15"/>
    <property type="match status" value="1"/>
</dbReference>
<evidence type="ECO:0000255" key="1">
    <source>
        <dbReference type="HAMAP-Rule" id="MF_01343"/>
    </source>
</evidence>
<evidence type="ECO:0000305" key="2"/>
<comment type="function">
    <text evidence="1">One of the primary rRNA binding proteins, it binds directly to 16S rRNA where it helps nucleate assembly of the platform of the 30S subunit by binding and bridging several RNA helices of the 16S rRNA.</text>
</comment>
<comment type="function">
    <text evidence="1">Forms an intersubunit bridge (bridge B4) with the 23S rRNA of the 50S subunit in the ribosome.</text>
</comment>
<comment type="subunit">
    <text evidence="1">Part of the 30S ribosomal subunit. Forms a bridge to the 50S subunit in the 70S ribosome, contacting the 23S rRNA.</text>
</comment>
<comment type="similarity">
    <text evidence="1">Belongs to the universal ribosomal protein uS15 family.</text>
</comment>
<organism>
    <name type="scientific">Burkholderia multivorans (strain ATCC 17616 / 249)</name>
    <dbReference type="NCBI Taxonomy" id="395019"/>
    <lineage>
        <taxon>Bacteria</taxon>
        <taxon>Pseudomonadati</taxon>
        <taxon>Pseudomonadota</taxon>
        <taxon>Betaproteobacteria</taxon>
        <taxon>Burkholderiales</taxon>
        <taxon>Burkholderiaceae</taxon>
        <taxon>Burkholderia</taxon>
        <taxon>Burkholderia cepacia complex</taxon>
    </lineage>
</organism>
<reference key="1">
    <citation type="submission" date="2007-10" db="EMBL/GenBank/DDBJ databases">
        <title>Complete sequence of chromosome 1 of Burkholderia multivorans ATCC 17616.</title>
        <authorList>
            <person name="Copeland A."/>
            <person name="Lucas S."/>
            <person name="Lapidus A."/>
            <person name="Barry K."/>
            <person name="Glavina del Rio T."/>
            <person name="Dalin E."/>
            <person name="Tice H."/>
            <person name="Pitluck S."/>
            <person name="Chain P."/>
            <person name="Malfatti S."/>
            <person name="Shin M."/>
            <person name="Vergez L."/>
            <person name="Schmutz J."/>
            <person name="Larimer F."/>
            <person name="Land M."/>
            <person name="Hauser L."/>
            <person name="Kyrpides N."/>
            <person name="Kim E."/>
            <person name="Tiedje J."/>
            <person name="Richardson P."/>
        </authorList>
    </citation>
    <scope>NUCLEOTIDE SEQUENCE [LARGE SCALE GENOMIC DNA]</scope>
    <source>
        <strain>ATCC 17616 / 249</strain>
    </source>
</reference>
<reference key="2">
    <citation type="submission" date="2007-04" db="EMBL/GenBank/DDBJ databases">
        <title>Complete genome sequence of Burkholderia multivorans ATCC 17616.</title>
        <authorList>
            <person name="Ohtsubo Y."/>
            <person name="Yamashita A."/>
            <person name="Kurokawa K."/>
            <person name="Takami H."/>
            <person name="Yuhara S."/>
            <person name="Nishiyama E."/>
            <person name="Endo R."/>
            <person name="Miyazaki R."/>
            <person name="Ono A."/>
            <person name="Yano K."/>
            <person name="Ito M."/>
            <person name="Sota M."/>
            <person name="Yuji N."/>
            <person name="Hattori M."/>
            <person name="Tsuda M."/>
        </authorList>
    </citation>
    <scope>NUCLEOTIDE SEQUENCE [LARGE SCALE GENOMIC DNA]</scope>
    <source>
        <strain>ATCC 17616 / 249</strain>
    </source>
</reference>
<keyword id="KW-1185">Reference proteome</keyword>
<keyword id="KW-0687">Ribonucleoprotein</keyword>
<keyword id="KW-0689">Ribosomal protein</keyword>
<keyword id="KW-0694">RNA-binding</keyword>
<keyword id="KW-0699">rRNA-binding</keyword>
<accession>A9AJN9</accession>
<name>RS15_BURM1</name>
<sequence>MSVADIKKSEVVAQFARGTNDTGSPEVQVALLTARIVELTGHFKTHAKDHHSRRGLLRMVSRRRKLLDYLKGKDADRYRALIEKLGLRK</sequence>